<feature type="chain" id="PRO_0000196616" description="Putative cation/proton antiporter YbaL">
    <location>
        <begin position="1"/>
        <end position="558"/>
    </location>
</feature>
<feature type="topological domain" description="Periplasmic" evidence="1">
    <location>
        <begin position="1"/>
        <end position="3"/>
    </location>
</feature>
<feature type="transmembrane region" description="Helical" evidence="1">
    <location>
        <begin position="4"/>
        <end position="24"/>
    </location>
</feature>
<feature type="topological domain" description="Cytoplasmic" evidence="1">
    <location>
        <begin position="25"/>
        <end position="31"/>
    </location>
</feature>
<feature type="transmembrane region" description="Helical" evidence="1">
    <location>
        <begin position="32"/>
        <end position="52"/>
    </location>
</feature>
<feature type="topological domain" description="Periplasmic" evidence="1">
    <location>
        <begin position="53"/>
        <end position="55"/>
    </location>
</feature>
<feature type="transmembrane region" description="Helical" evidence="1">
    <location>
        <begin position="56"/>
        <end position="76"/>
    </location>
</feature>
<feature type="topological domain" description="Cytoplasmic" evidence="1">
    <location>
        <begin position="77"/>
        <end position="85"/>
    </location>
</feature>
<feature type="transmembrane region" description="Helical" evidence="1">
    <location>
        <begin position="86"/>
        <end position="106"/>
    </location>
</feature>
<feature type="topological domain" description="Periplasmic" evidence="1">
    <location>
        <begin position="107"/>
        <end position="112"/>
    </location>
</feature>
<feature type="transmembrane region" description="Helical" evidence="1">
    <location>
        <begin position="113"/>
        <end position="133"/>
    </location>
</feature>
<feature type="topological domain" description="Cytoplasmic" evidence="1">
    <location>
        <begin position="134"/>
        <end position="148"/>
    </location>
</feature>
<feature type="transmembrane region" description="Helical" evidence="1">
    <location>
        <begin position="149"/>
        <end position="169"/>
    </location>
</feature>
<feature type="topological domain" description="Periplasmic" evidence="1">
    <location>
        <begin position="170"/>
        <end position="185"/>
    </location>
</feature>
<feature type="transmembrane region" description="Helical" evidence="1">
    <location>
        <begin position="186"/>
        <end position="206"/>
    </location>
</feature>
<feature type="topological domain" description="Cytoplasmic" evidence="1">
    <location>
        <begin position="207"/>
        <end position="225"/>
    </location>
</feature>
<feature type="transmembrane region" description="Helical" evidence="1">
    <location>
        <begin position="226"/>
        <end position="246"/>
    </location>
</feature>
<feature type="topological domain" description="Periplasmic" evidence="1">
    <location>
        <position position="247"/>
    </location>
</feature>
<feature type="transmembrane region" description="Helical" evidence="1">
    <location>
        <begin position="248"/>
        <end position="268"/>
    </location>
</feature>
<feature type="topological domain" description="Cytoplasmic" evidence="1">
    <location>
        <begin position="269"/>
        <end position="279"/>
    </location>
</feature>
<feature type="transmembrane region" description="Helical" evidence="1">
    <location>
        <begin position="280"/>
        <end position="300"/>
    </location>
</feature>
<feature type="topological domain" description="Periplasmic" evidence="1">
    <location>
        <begin position="301"/>
        <end position="303"/>
    </location>
</feature>
<feature type="transmembrane region" description="Helical" evidence="1">
    <location>
        <begin position="304"/>
        <end position="324"/>
    </location>
</feature>
<feature type="topological domain" description="Cytoplasmic" evidence="1">
    <location>
        <begin position="325"/>
        <end position="336"/>
    </location>
</feature>
<feature type="transmembrane region" description="Helical" evidence="1">
    <location>
        <begin position="337"/>
        <end position="357"/>
    </location>
</feature>
<feature type="topological domain" description="Periplasmic" evidence="1">
    <location>
        <begin position="358"/>
        <end position="367"/>
    </location>
</feature>
<feature type="transmembrane region" description="Helical" evidence="1">
    <location>
        <begin position="368"/>
        <end position="388"/>
    </location>
</feature>
<feature type="topological domain" description="Cytoplasmic" evidence="1 3">
    <location>
        <begin position="389"/>
        <end position="558"/>
    </location>
</feature>
<feature type="domain" description="RCK N-terminal" evidence="2">
    <location>
        <begin position="417"/>
        <end position="534"/>
    </location>
</feature>
<feature type="binding site" evidence="6">
    <location>
        <begin position="427"/>
        <end position="428"/>
    </location>
    <ligand>
        <name>AMP</name>
        <dbReference type="ChEBI" id="CHEBI:456215"/>
    </ligand>
</feature>
<feature type="binding site" evidence="6">
    <location>
        <begin position="447"/>
        <end position="448"/>
    </location>
    <ligand>
        <name>AMP</name>
        <dbReference type="ChEBI" id="CHEBI:456215"/>
    </ligand>
</feature>
<feature type="binding site" evidence="6">
    <location>
        <begin position="467"/>
        <end position="468"/>
    </location>
    <ligand>
        <name>AMP</name>
        <dbReference type="ChEBI" id="CHEBI:456215"/>
    </ligand>
</feature>
<feature type="binding site" evidence="6">
    <location>
        <position position="494"/>
    </location>
    <ligand>
        <name>AMP</name>
        <dbReference type="ChEBI" id="CHEBI:456215"/>
    </ligand>
</feature>
<feature type="binding site" evidence="6">
    <location>
        <position position="514"/>
    </location>
    <ligand>
        <name>AMP</name>
        <dbReference type="ChEBI" id="CHEBI:456215"/>
    </ligand>
</feature>
<feature type="sequence conflict" description="In Ref. 5; L35149." evidence="4" ref="5">
    <original>GEVVTG</original>
    <variation>VRW</variation>
    <location>
        <begin position="553"/>
        <end position="558"/>
    </location>
</feature>
<feature type="strand" evidence="7">
    <location>
        <begin position="420"/>
        <end position="423"/>
    </location>
</feature>
<feature type="helix" evidence="7">
    <location>
        <begin position="427"/>
        <end position="438"/>
    </location>
</feature>
<feature type="strand" evidence="7">
    <location>
        <begin position="443"/>
        <end position="448"/>
    </location>
</feature>
<feature type="helix" evidence="7">
    <location>
        <begin position="450"/>
        <end position="458"/>
    </location>
</feature>
<feature type="strand" evidence="7">
    <location>
        <begin position="462"/>
        <end position="466"/>
    </location>
</feature>
<feature type="helix" evidence="7">
    <location>
        <begin position="471"/>
        <end position="476"/>
    </location>
</feature>
<feature type="helix" evidence="7">
    <location>
        <begin position="479"/>
        <end position="481"/>
    </location>
</feature>
<feature type="strand" evidence="7">
    <location>
        <begin position="483"/>
        <end position="487"/>
    </location>
</feature>
<feature type="helix" evidence="7">
    <location>
        <begin position="492"/>
        <end position="505"/>
    </location>
</feature>
<feature type="strand" evidence="7">
    <location>
        <begin position="507"/>
        <end position="517"/>
    </location>
</feature>
<feature type="helix" evidence="7">
    <location>
        <begin position="518"/>
        <end position="526"/>
    </location>
</feature>
<feature type="strand" evidence="7">
    <location>
        <begin position="530"/>
        <end position="534"/>
    </location>
</feature>
<feature type="helix" evidence="7">
    <location>
        <begin position="535"/>
        <end position="548"/>
    </location>
</feature>
<evidence type="ECO:0000255" key="1"/>
<evidence type="ECO:0000255" key="2">
    <source>
        <dbReference type="PROSITE-ProRule" id="PRU00543"/>
    </source>
</evidence>
<evidence type="ECO:0000269" key="3">
    <source>
    </source>
</evidence>
<evidence type="ECO:0000305" key="4"/>
<evidence type="ECO:0000305" key="5">
    <source>
    </source>
</evidence>
<evidence type="ECO:0007744" key="6">
    <source>
        <dbReference type="PDB" id="3FWZ"/>
    </source>
</evidence>
<evidence type="ECO:0007829" key="7">
    <source>
        <dbReference type="PDB" id="3FWZ"/>
    </source>
</evidence>
<dbReference type="EMBL" id="U82664">
    <property type="protein sequence ID" value="AAB40232.1"/>
    <property type="molecule type" value="Genomic_DNA"/>
</dbReference>
<dbReference type="EMBL" id="U00096">
    <property type="protein sequence ID" value="AAC73580.1"/>
    <property type="molecule type" value="Genomic_DNA"/>
</dbReference>
<dbReference type="EMBL" id="AP009048">
    <property type="protein sequence ID" value="BAE76257.1"/>
    <property type="molecule type" value="Genomic_DNA"/>
</dbReference>
<dbReference type="EMBL" id="D73370">
    <property type="status" value="NOT_ANNOTATED_CDS"/>
    <property type="molecule type" value="Genomic_DNA"/>
</dbReference>
<dbReference type="EMBL" id="L35149">
    <property type="status" value="NOT_ANNOTATED_CDS"/>
    <property type="molecule type" value="Genomic_DNA"/>
</dbReference>
<dbReference type="PIR" id="E64778">
    <property type="entry name" value="E64778"/>
</dbReference>
<dbReference type="RefSeq" id="NP_415011.1">
    <property type="nucleotide sequence ID" value="NC_000913.3"/>
</dbReference>
<dbReference type="RefSeq" id="WP_000546237.1">
    <property type="nucleotide sequence ID" value="NZ_SSZK01000009.1"/>
</dbReference>
<dbReference type="PDB" id="3FWZ">
    <property type="method" value="X-ray"/>
    <property type="resolution" value="1.79 A"/>
    <property type="chains" value="A/B=414-550"/>
</dbReference>
<dbReference type="PDBsum" id="3FWZ"/>
<dbReference type="SMR" id="P39830"/>
<dbReference type="BioGRID" id="4262046">
    <property type="interactions" value="143"/>
</dbReference>
<dbReference type="DIP" id="DIP-11300N"/>
<dbReference type="FunCoup" id="P39830">
    <property type="interactions" value="500"/>
</dbReference>
<dbReference type="IntAct" id="P39830">
    <property type="interactions" value="2"/>
</dbReference>
<dbReference type="STRING" id="511145.b0478"/>
<dbReference type="TCDB" id="2.A.37.1.5">
    <property type="family name" value="the monovalent cation:proton antiporter-2 (cpa2) family"/>
</dbReference>
<dbReference type="jPOST" id="P39830"/>
<dbReference type="PaxDb" id="511145-b0478"/>
<dbReference type="EnsemblBacteria" id="AAC73580">
    <property type="protein sequence ID" value="AAC73580"/>
    <property type="gene ID" value="b0478"/>
</dbReference>
<dbReference type="GeneID" id="946576"/>
<dbReference type="KEGG" id="ecj:JW0467"/>
<dbReference type="KEGG" id="eco:b0478"/>
<dbReference type="KEGG" id="ecoc:C3026_02350"/>
<dbReference type="PATRIC" id="fig|1411691.4.peg.1798"/>
<dbReference type="EchoBASE" id="EB2507"/>
<dbReference type="eggNOG" id="COG1226">
    <property type="taxonomic scope" value="Bacteria"/>
</dbReference>
<dbReference type="eggNOG" id="COG4651">
    <property type="taxonomic scope" value="Bacteria"/>
</dbReference>
<dbReference type="HOGENOM" id="CLU_005126_9_1_6"/>
<dbReference type="InParanoid" id="P39830"/>
<dbReference type="OMA" id="TTFSHEG"/>
<dbReference type="OrthoDB" id="9781411at2"/>
<dbReference type="PhylomeDB" id="P39830"/>
<dbReference type="BioCyc" id="EcoCyc:YBAL-MONOMER"/>
<dbReference type="EvolutionaryTrace" id="P39830"/>
<dbReference type="PRO" id="PR:P39830"/>
<dbReference type="Proteomes" id="UP000000625">
    <property type="component" value="Chromosome"/>
</dbReference>
<dbReference type="GO" id="GO:0005886">
    <property type="term" value="C:plasma membrane"/>
    <property type="evidence" value="ECO:0000314"/>
    <property type="project" value="EcoCyc"/>
</dbReference>
<dbReference type="GO" id="GO:0015297">
    <property type="term" value="F:antiporter activity"/>
    <property type="evidence" value="ECO:0007669"/>
    <property type="project" value="UniProtKB-KW"/>
</dbReference>
<dbReference type="GO" id="GO:0008324">
    <property type="term" value="F:monoatomic cation transmembrane transporter activity"/>
    <property type="evidence" value="ECO:0007669"/>
    <property type="project" value="InterPro"/>
</dbReference>
<dbReference type="GO" id="GO:0000166">
    <property type="term" value="F:nucleotide binding"/>
    <property type="evidence" value="ECO:0007669"/>
    <property type="project" value="UniProtKB-KW"/>
</dbReference>
<dbReference type="GO" id="GO:0006813">
    <property type="term" value="P:potassium ion transport"/>
    <property type="evidence" value="ECO:0007669"/>
    <property type="project" value="InterPro"/>
</dbReference>
<dbReference type="GO" id="GO:1902600">
    <property type="term" value="P:proton transmembrane transport"/>
    <property type="evidence" value="ECO:0007669"/>
    <property type="project" value="InterPro"/>
</dbReference>
<dbReference type="FunFam" id="1.20.1530.20:FF:000004">
    <property type="entry name" value="Kef family K(+) transporter"/>
    <property type="match status" value="1"/>
</dbReference>
<dbReference type="Gene3D" id="1.20.1530.20">
    <property type="match status" value="1"/>
</dbReference>
<dbReference type="Gene3D" id="3.40.50.720">
    <property type="entry name" value="NAD(P)-binding Rossmann-like Domain"/>
    <property type="match status" value="1"/>
</dbReference>
<dbReference type="InterPro" id="IPR006153">
    <property type="entry name" value="Cation/H_exchanger_TM"/>
</dbReference>
<dbReference type="InterPro" id="IPR004771">
    <property type="entry name" value="K/H_exchanger"/>
</dbReference>
<dbReference type="InterPro" id="IPR038770">
    <property type="entry name" value="Na+/solute_symporter_sf"/>
</dbReference>
<dbReference type="InterPro" id="IPR036291">
    <property type="entry name" value="NAD(P)-bd_dom_sf"/>
</dbReference>
<dbReference type="InterPro" id="IPR003148">
    <property type="entry name" value="RCK_N"/>
</dbReference>
<dbReference type="NCBIfam" id="TIGR00932">
    <property type="entry name" value="2a37"/>
    <property type="match status" value="1"/>
</dbReference>
<dbReference type="NCBIfam" id="NF007950">
    <property type="entry name" value="PRK10669.1"/>
    <property type="match status" value="1"/>
</dbReference>
<dbReference type="PANTHER" id="PTHR42751:SF1">
    <property type="entry name" value="CATION_PROTON ANTIPORTER YBAL-RELATED"/>
    <property type="match status" value="1"/>
</dbReference>
<dbReference type="PANTHER" id="PTHR42751">
    <property type="entry name" value="SODIUM/HYDROGEN EXCHANGER FAMILY/TRKA DOMAIN PROTEIN"/>
    <property type="match status" value="1"/>
</dbReference>
<dbReference type="Pfam" id="PF00999">
    <property type="entry name" value="Na_H_Exchanger"/>
    <property type="match status" value="1"/>
</dbReference>
<dbReference type="Pfam" id="PF02254">
    <property type="entry name" value="TrkA_N"/>
    <property type="match status" value="1"/>
</dbReference>
<dbReference type="SUPFAM" id="SSF51735">
    <property type="entry name" value="NAD(P)-binding Rossmann-fold domains"/>
    <property type="match status" value="1"/>
</dbReference>
<dbReference type="PROSITE" id="PS51201">
    <property type="entry name" value="RCK_N"/>
    <property type="match status" value="1"/>
</dbReference>
<name>YBAL_ECOLI</name>
<accession>P39830</accession>
<accession>P52068</accession>
<accession>P77724</accession>
<accession>Q2MBU9</accession>
<proteinExistence type="evidence at protein level"/>
<keyword id="KW-0002">3D-structure</keyword>
<keyword id="KW-0050">Antiport</keyword>
<keyword id="KW-0997">Cell inner membrane</keyword>
<keyword id="KW-1003">Cell membrane</keyword>
<keyword id="KW-0406">Ion transport</keyword>
<keyword id="KW-0472">Membrane</keyword>
<keyword id="KW-0547">Nucleotide-binding</keyword>
<keyword id="KW-1185">Reference proteome</keyword>
<keyword id="KW-0812">Transmembrane</keyword>
<keyword id="KW-1133">Transmembrane helix</keyword>
<keyword id="KW-0813">Transport</keyword>
<organism>
    <name type="scientific">Escherichia coli (strain K12)</name>
    <dbReference type="NCBI Taxonomy" id="83333"/>
    <lineage>
        <taxon>Bacteria</taxon>
        <taxon>Pseudomonadati</taxon>
        <taxon>Pseudomonadota</taxon>
        <taxon>Gammaproteobacteria</taxon>
        <taxon>Enterobacterales</taxon>
        <taxon>Enterobacteriaceae</taxon>
        <taxon>Escherichia</taxon>
    </lineage>
</organism>
<sequence length="558" mass="59424">MHHATPLITTIVGGLVLAFILGMLANKLRISPLVGYLLAGVLAGPFTPGFVADTKLAPELAELGVILLMFGVGLHFSLKDLMAVKAIAIPGAIAQIAVATLLGMALSAVLGWSLMTGIVFGLCLSTASTVVLLRALEERQLIDSQRGQIAIGWLIVEDLVMVLTLVLLPAVAGMMEQGDVGFATLAVDMGITIGKVIAFIAIMMLVGRRLVPWIMARSAATGSRELFTLSVLALALGVAFGAVELFDVSFALGAFFAGMVLNESELSHRAAHDTLPLRDAFAVLFFVSVGMLFDPLILIQQPLAVLATLAIILFGKSLAAFFLVRLFGHSQRTALTIAASLAQIGEFAFILAGLGMALNLLPQAGQNLVLAGAILSIMLNPVLFALLEKYLAKTETLEEQTLEEAIEEEKQIPVDICNHALLVGYGRVGSLLGEKLLASDIPLVVIETSRTRVDELRERGVRAVLGNAANEEIMQLAHLECAKWLILTIPNGYEAGEIVASARAKNPDIEIIARAHYDDEVAYITERGANQVVMGEREIARTMLELLETPPAGEVVTG</sequence>
<gene>
    <name type="primary">ybaL</name>
    <name type="synonym">ylaA</name>
    <name type="ordered locus">b0478</name>
    <name type="ordered locus">JW0467</name>
</gene>
<protein>
    <recommendedName>
        <fullName>Putative cation/proton antiporter YbaL</fullName>
    </recommendedName>
</protein>
<reference key="1">
    <citation type="submission" date="1997-01" db="EMBL/GenBank/DDBJ databases">
        <title>Sequence of minutes 4-25 of Escherichia coli.</title>
        <authorList>
            <person name="Chung E."/>
            <person name="Allen E."/>
            <person name="Araujo R."/>
            <person name="Aparicio A.M."/>
            <person name="Davis K."/>
            <person name="Duncan M."/>
            <person name="Federspiel N."/>
            <person name="Hyman R."/>
            <person name="Kalman S."/>
            <person name="Komp C."/>
            <person name="Kurdi O."/>
            <person name="Lew H."/>
            <person name="Lin D."/>
            <person name="Namath A."/>
            <person name="Oefner P."/>
            <person name="Roberts D."/>
            <person name="Schramm S."/>
            <person name="Davis R.W."/>
        </authorList>
    </citation>
    <scope>NUCLEOTIDE SEQUENCE [LARGE SCALE GENOMIC DNA]</scope>
    <source>
        <strain>K12 / MG1655 / ATCC 47076</strain>
    </source>
</reference>
<reference key="2">
    <citation type="journal article" date="1997" name="Science">
        <title>The complete genome sequence of Escherichia coli K-12.</title>
        <authorList>
            <person name="Blattner F.R."/>
            <person name="Plunkett G. III"/>
            <person name="Bloch C.A."/>
            <person name="Perna N.T."/>
            <person name="Burland V."/>
            <person name="Riley M."/>
            <person name="Collado-Vides J."/>
            <person name="Glasner J.D."/>
            <person name="Rode C.K."/>
            <person name="Mayhew G.F."/>
            <person name="Gregor J."/>
            <person name="Davis N.W."/>
            <person name="Kirkpatrick H.A."/>
            <person name="Goeden M.A."/>
            <person name="Rose D.J."/>
            <person name="Mau B."/>
            <person name="Shao Y."/>
        </authorList>
    </citation>
    <scope>NUCLEOTIDE SEQUENCE [LARGE SCALE GENOMIC DNA]</scope>
    <source>
        <strain>K12 / MG1655 / ATCC 47076</strain>
    </source>
</reference>
<reference key="3">
    <citation type="journal article" date="2006" name="Mol. Syst. Biol.">
        <title>Highly accurate genome sequences of Escherichia coli K-12 strains MG1655 and W3110.</title>
        <authorList>
            <person name="Hayashi K."/>
            <person name="Morooka N."/>
            <person name="Yamamoto Y."/>
            <person name="Fujita K."/>
            <person name="Isono K."/>
            <person name="Choi S."/>
            <person name="Ohtsubo E."/>
            <person name="Baba T."/>
            <person name="Wanner B.L."/>
            <person name="Mori H."/>
            <person name="Horiuchi T."/>
        </authorList>
    </citation>
    <scope>NUCLEOTIDE SEQUENCE [LARGE SCALE GENOMIC DNA]</scope>
    <source>
        <strain>K12 / W3110 / ATCC 27325 / DSM 5911</strain>
    </source>
</reference>
<reference key="4">
    <citation type="submission" date="1995-10" db="EMBL/GenBank/DDBJ databases">
        <authorList>
            <person name="Fujisaki S."/>
            <person name="Ohnuma S."/>
            <person name="Horiuchi T."/>
            <person name="Takahashi I."/>
            <person name="Tsukui S."/>
            <person name="Nishimura Y."/>
            <person name="Nishino T."/>
            <person name="Inokuchi H."/>
        </authorList>
    </citation>
    <scope>NUCLEOTIDE SEQUENCE [GENOMIC DNA] OF 1-56</scope>
    <source>
        <strain>K12 / DH5-alpha</strain>
    </source>
</reference>
<reference key="5">
    <citation type="journal article" date="1995" name="J. Bacteriol.">
        <title>Cloning and characterization of the gsk gene encoding guanosine kinase of Escherichia coli.</title>
        <authorList>
            <person name="Harlow K.W."/>
            <person name="Nygaard P."/>
            <person name="Hove-Jensen B."/>
        </authorList>
    </citation>
    <scope>NUCLEOTIDE SEQUENCE [GENOMIC DNA] OF 486-558</scope>
    <source>
        <strain>K12</strain>
    </source>
</reference>
<reference key="6">
    <citation type="journal article" date="2005" name="Science">
        <title>Global topology analysis of the Escherichia coli inner membrane proteome.</title>
        <authorList>
            <person name="Daley D.O."/>
            <person name="Rapp M."/>
            <person name="Granseth E."/>
            <person name="Melen K."/>
            <person name="Drew D."/>
            <person name="von Heijne G."/>
        </authorList>
    </citation>
    <scope>SUBCELLULAR LOCATION</scope>
    <scope>TOPOLOGY [LARGE SCALE ANALYSIS]</scope>
    <source>
        <strain>K12 / MG1655 / ATCC 47076</strain>
    </source>
</reference>
<reference evidence="6" key="7">
    <citation type="submission" date="2009-01" db="PDB data bank">
        <title>Crystal structure of TrkA-N domain of inner membrane protein YbaL from Escherichia coli.</title>
        <authorList>
            <person name="Chang C."/>
            <person name="Bigelow L."/>
            <person name="Buck K."/>
            <person name="Joachimiak A."/>
        </authorList>
    </citation>
    <scope>X-RAY CRYSTALLOGRAPHY (1.79 ANGSTROMS) OF 414-550 IN COMPLEX WITH AMP</scope>
</reference>
<comment type="subcellular location">
    <subcellularLocation>
        <location evidence="3">Cell inner membrane</location>
        <topology evidence="5">Multi-pass membrane protein</topology>
    </subcellularLocation>
</comment>
<comment type="similarity">
    <text evidence="4">Belongs to the monovalent cation:proton antiporter 2 (CPA2) transporter (TC 2.A.37) family.</text>
</comment>